<name>SOT10_ARATH</name>
<feature type="chain" id="PRO_0000417058" description="Cytosolic sulfotransferase 10">
    <location>
        <begin position="1"/>
        <end position="333"/>
    </location>
</feature>
<feature type="active site" description="Proton acceptor" evidence="1">
    <location>
        <position position="146"/>
    </location>
</feature>
<feature type="binding site" evidence="1">
    <location>
        <begin position="76"/>
        <end position="81"/>
    </location>
    <ligand>
        <name>3'-phosphoadenylyl sulfate</name>
        <dbReference type="ChEBI" id="CHEBI:58339"/>
    </ligand>
</feature>
<feature type="binding site" evidence="1">
    <location>
        <position position="168"/>
    </location>
    <ligand>
        <name>3'-phosphoadenylyl sulfate</name>
        <dbReference type="ChEBI" id="CHEBI:58339"/>
    </ligand>
</feature>
<feature type="binding site" evidence="1">
    <location>
        <position position="176"/>
    </location>
    <ligand>
        <name>3'-phosphoadenylyl sulfate</name>
        <dbReference type="ChEBI" id="CHEBI:58339"/>
    </ligand>
</feature>
<feature type="binding site" evidence="1">
    <location>
        <position position="234"/>
    </location>
    <ligand>
        <name>3'-phosphoadenylyl sulfate</name>
        <dbReference type="ChEBI" id="CHEBI:58339"/>
    </ligand>
</feature>
<feature type="binding site" evidence="1">
    <location>
        <begin position="299"/>
        <end position="301"/>
    </location>
    <ligand>
        <name>3'-phosphoadenylyl sulfate</name>
        <dbReference type="ChEBI" id="CHEBI:58339"/>
    </ligand>
</feature>
<evidence type="ECO:0000250" key="1"/>
<evidence type="ECO:0000269" key="2">
    <source>
    </source>
</evidence>
<evidence type="ECO:0000305" key="3"/>
<comment type="function">
    <text evidence="2">Sulfotransferase that utilizes 3'-phospho-5'-adenylyl sulfate (PAPS) as sulfonate donor to specifically catalyze the sulfate conjugation of brassinosteroids, including castasterone (CS), brassinolide (BL), related 24-epimers, and the naturally occurring (22R, 23R)-28-homobrassinosteroids. No activity on phenolic acids, desulfo-glucosinolates, flavonoids, steroids, gibberellic acids, cytokinins, phenylpropanoids, hydroxyjasmonates and coumarins.</text>
</comment>
<comment type="biophysicochemical properties">
    <kinetics>
        <KM evidence="2">16 uM for brassinolide</KM>
        <KM evidence="2">14 uM for castasterone</KM>
        <KM evidence="2">43 uM for 24-epibrassinolide</KM>
        <KM evidence="2">19 uM for (22R, 23R)-28-homobrassinolide</KM>
        <KM evidence="2">7 uM for (22R, 23R)-28-homocastasterone</KM>
        <KM evidence="2">0.4 uM for 3'-phospho-5'-adenylyl sulfate</KM>
        <Vmax evidence="2">5.0 pmol/sec/mg enzyme with brassinolide as substrate</Vmax>
        <Vmax evidence="2">3.0 pmol/sec/mg enzyme with castasterone as substrate</Vmax>
        <Vmax evidence="2">10.0 pmol/sec/mg enzyme with 24-epibrassinolide as substrate</Vmax>
        <Vmax evidence="2">34.0 pmol/sec/mg enzyme with (22R, 23R)-28-homobrassinolide as substrate</Vmax>
        <Vmax evidence="2">19.0 pmol/sec/mg enzyme with (22R, 23R)-28-homocastasterone as substrate</Vmax>
    </kinetics>
</comment>
<comment type="subcellular location">
    <subcellularLocation>
        <location evidence="1">Cytoplasm</location>
    </subcellularLocation>
</comment>
<comment type="tissue specificity">
    <text evidence="2">Expressed in roots.</text>
</comment>
<comment type="induction">
    <text evidence="2">Down-regulated by trans-zeatin.</text>
</comment>
<comment type="similarity">
    <text evidence="3">Belongs to the sulfotransferase 1 family.</text>
</comment>
<reference key="1">
    <citation type="journal article" date="1999" name="Nature">
        <title>Sequence and analysis of chromosome 2 of the plant Arabidopsis thaliana.</title>
        <authorList>
            <person name="Lin X."/>
            <person name="Kaul S."/>
            <person name="Rounsley S.D."/>
            <person name="Shea T.P."/>
            <person name="Benito M.-I."/>
            <person name="Town C.D."/>
            <person name="Fujii C.Y."/>
            <person name="Mason T.M."/>
            <person name="Bowman C.L."/>
            <person name="Barnstead M.E."/>
            <person name="Feldblyum T.V."/>
            <person name="Buell C.R."/>
            <person name="Ketchum K.A."/>
            <person name="Lee J.J."/>
            <person name="Ronning C.M."/>
            <person name="Koo H.L."/>
            <person name="Moffat K.S."/>
            <person name="Cronin L.A."/>
            <person name="Shen M."/>
            <person name="Pai G."/>
            <person name="Van Aken S."/>
            <person name="Umayam L."/>
            <person name="Tallon L.J."/>
            <person name="Gill J.E."/>
            <person name="Adams M.D."/>
            <person name="Carrera A.J."/>
            <person name="Creasy T.H."/>
            <person name="Goodman H.M."/>
            <person name="Somerville C.R."/>
            <person name="Copenhaver G.P."/>
            <person name="Preuss D."/>
            <person name="Nierman W.C."/>
            <person name="White O."/>
            <person name="Eisen J.A."/>
            <person name="Salzberg S.L."/>
            <person name="Fraser C.M."/>
            <person name="Venter J.C."/>
        </authorList>
    </citation>
    <scope>NUCLEOTIDE SEQUENCE [LARGE SCALE GENOMIC DNA]</scope>
    <source>
        <strain>cv. Columbia</strain>
    </source>
</reference>
<reference key="2">
    <citation type="journal article" date="2017" name="Plant J.">
        <title>Araport11: a complete reannotation of the Arabidopsis thaliana reference genome.</title>
        <authorList>
            <person name="Cheng C.Y."/>
            <person name="Krishnakumar V."/>
            <person name="Chan A.P."/>
            <person name="Thibaud-Nissen F."/>
            <person name="Schobel S."/>
            <person name="Town C.D."/>
        </authorList>
    </citation>
    <scope>GENOME REANNOTATION</scope>
    <source>
        <strain>cv. Columbia</strain>
    </source>
</reference>
<reference key="3">
    <citation type="journal article" date="2004" name="J. Exp. Bot.">
        <title>The multi-protein family of Arabidopsis sulphotransferases and their relatives in other plant species.</title>
        <authorList>
            <person name="Klein M."/>
            <person name="Papenbrock J."/>
        </authorList>
    </citation>
    <scope>GENE FAMILY</scope>
    <scope>NOMENCLATURE</scope>
</reference>
<reference key="4">
    <citation type="journal article" date="2007" name="Planta">
        <title>Molecular and biochemical characterization of two brassinosteroid sulfotransferases from Arabidopsis, AtST4a (At2g14920) and AtST1 (At2g03760).</title>
        <authorList>
            <person name="Marsolais F."/>
            <person name="Boyd J."/>
            <person name="Paredes Y."/>
            <person name="Schinas A.M."/>
            <person name="Garcia M."/>
            <person name="Elzein S."/>
            <person name="Varin L."/>
        </authorList>
    </citation>
    <scope>FUNCTION</scope>
    <scope>CATALYTIC ACTIVITY</scope>
    <scope>BIOPHYSICOCHEMICAL PROPERTIES</scope>
    <scope>INDUCTION BY TRANS-ZEATIN</scope>
    <scope>TISSUE SPECIFICITY</scope>
    <source>
        <strain>cv. Columbia</strain>
    </source>
</reference>
<keyword id="KW-0963">Cytoplasm</keyword>
<keyword id="KW-1185">Reference proteome</keyword>
<keyword id="KW-0808">Transferase</keyword>
<accession>O82330</accession>
<protein>
    <recommendedName>
        <fullName>Cytosolic sulfotransferase 10</fullName>
        <shortName>AtSOT10</shortName>
        <ecNumber>2.8.2.-</ecNumber>
    </recommendedName>
    <alternativeName>
        <fullName>Sulfotransferase 4a</fullName>
        <shortName>AtST4a</shortName>
    </alternativeName>
</protein>
<gene>
    <name type="primary">SOT10</name>
    <name type="synonym">ST4A</name>
    <name type="ordered locus">At2g14920</name>
    <name type="ORF">T26I20</name>
</gene>
<dbReference type="EC" id="2.8.2.-"/>
<dbReference type="EMBL" id="AC005396">
    <property type="protein sequence ID" value="AAC61289.1"/>
    <property type="molecule type" value="Genomic_DNA"/>
</dbReference>
<dbReference type="EMBL" id="CP002685">
    <property type="protein sequence ID" value="AEC06351.1"/>
    <property type="molecule type" value="Genomic_DNA"/>
</dbReference>
<dbReference type="PIR" id="A84523">
    <property type="entry name" value="A84523"/>
</dbReference>
<dbReference type="RefSeq" id="NP_179098.1">
    <property type="nucleotide sequence ID" value="NM_127056.1"/>
</dbReference>
<dbReference type="SMR" id="O82330"/>
<dbReference type="BioGRID" id="1340">
    <property type="interactions" value="1"/>
</dbReference>
<dbReference type="FunCoup" id="O82330">
    <property type="interactions" value="39"/>
</dbReference>
<dbReference type="STRING" id="3702.O82330"/>
<dbReference type="PaxDb" id="3702-AT2G14920.1"/>
<dbReference type="ProteomicsDB" id="232547"/>
<dbReference type="EnsemblPlants" id="AT2G14920.1">
    <property type="protein sequence ID" value="AT2G14920.1"/>
    <property type="gene ID" value="AT2G14920"/>
</dbReference>
<dbReference type="GeneID" id="815981"/>
<dbReference type="Gramene" id="AT2G14920.1">
    <property type="protein sequence ID" value="AT2G14920.1"/>
    <property type="gene ID" value="AT2G14920"/>
</dbReference>
<dbReference type="KEGG" id="ath:AT2G14920"/>
<dbReference type="Araport" id="AT2G14920"/>
<dbReference type="TAIR" id="AT2G14920">
    <property type="gene designation" value="ST4A"/>
</dbReference>
<dbReference type="eggNOG" id="KOG1584">
    <property type="taxonomic scope" value="Eukaryota"/>
</dbReference>
<dbReference type="HOGENOM" id="CLU_027239_0_1_1"/>
<dbReference type="InParanoid" id="O82330"/>
<dbReference type="OMA" id="HAMQETL"/>
<dbReference type="PhylomeDB" id="O82330"/>
<dbReference type="BioCyc" id="ARA:AT2G14920-MONOMER"/>
<dbReference type="BioCyc" id="MetaCyc:AT2G14920-MONOMER"/>
<dbReference type="SABIO-RK" id="O82330"/>
<dbReference type="PRO" id="PR:O82330"/>
<dbReference type="Proteomes" id="UP000006548">
    <property type="component" value="Chromosome 2"/>
</dbReference>
<dbReference type="ExpressionAtlas" id="O82330">
    <property type="expression patterns" value="baseline and differential"/>
</dbReference>
<dbReference type="GO" id="GO:0005737">
    <property type="term" value="C:cytoplasm"/>
    <property type="evidence" value="ECO:0007669"/>
    <property type="project" value="UniProtKB-SubCell"/>
</dbReference>
<dbReference type="GO" id="GO:0080118">
    <property type="term" value="F:brassinosteroid sulfotransferase activity"/>
    <property type="evidence" value="ECO:0000314"/>
    <property type="project" value="TAIR"/>
</dbReference>
<dbReference type="GO" id="GO:0016131">
    <property type="term" value="P:brassinosteroid metabolic process"/>
    <property type="evidence" value="ECO:0000314"/>
    <property type="project" value="TAIR"/>
</dbReference>
<dbReference type="GO" id="GO:0009735">
    <property type="term" value="P:response to cytokinin"/>
    <property type="evidence" value="ECO:0000270"/>
    <property type="project" value="TAIR"/>
</dbReference>
<dbReference type="FunFam" id="3.40.50.300:FF:001258">
    <property type="entry name" value="Sulfotransferase"/>
    <property type="match status" value="1"/>
</dbReference>
<dbReference type="Gene3D" id="3.40.50.300">
    <property type="entry name" value="P-loop containing nucleotide triphosphate hydrolases"/>
    <property type="match status" value="1"/>
</dbReference>
<dbReference type="InterPro" id="IPR027417">
    <property type="entry name" value="P-loop_NTPase"/>
</dbReference>
<dbReference type="InterPro" id="IPR000863">
    <property type="entry name" value="Sulfotransferase_dom"/>
</dbReference>
<dbReference type="PANTHER" id="PTHR11783">
    <property type="entry name" value="SULFOTRANSFERASE SULT"/>
    <property type="match status" value="1"/>
</dbReference>
<dbReference type="Pfam" id="PF00685">
    <property type="entry name" value="Sulfotransfer_1"/>
    <property type="match status" value="1"/>
</dbReference>
<dbReference type="SUPFAM" id="SSF52540">
    <property type="entry name" value="P-loop containing nucleoside triphosphate hydrolases"/>
    <property type="match status" value="1"/>
</dbReference>
<proteinExistence type="evidence at protein level"/>
<sequence length="333" mass="38924">MDEKDRPKNLREEEEKPSEETKILISSLPWEIDYLGNKLFNYEGYWYSEDILQSIPNIHTGFQPQETDIILASFYKSGTTWLKALTFALVQRSKHSLEDHQHPLLHHNPHEIVPNLELDLYLKSSKPDLTKFLSSSSSSPRLFSTHMSLDPLQVPLKENLCKIVYVCRNVKDVMVSVWYFRQSKKITRAEDYSLEAIFESFCNGVTLHGPFWDHALSYWRGSLEDPKHFLFMRYEDLKAEPRTQVKRLAEFLDCPFTKEEEDSGSVDKILELCSLSNLRSVEINKTRTSSRVDFKSYFRKGQVGDWKSYMTPEMVDKIDMIIEEKLKGSGLKF</sequence>
<organism>
    <name type="scientific">Arabidopsis thaliana</name>
    <name type="common">Mouse-ear cress</name>
    <dbReference type="NCBI Taxonomy" id="3702"/>
    <lineage>
        <taxon>Eukaryota</taxon>
        <taxon>Viridiplantae</taxon>
        <taxon>Streptophyta</taxon>
        <taxon>Embryophyta</taxon>
        <taxon>Tracheophyta</taxon>
        <taxon>Spermatophyta</taxon>
        <taxon>Magnoliopsida</taxon>
        <taxon>eudicotyledons</taxon>
        <taxon>Gunneridae</taxon>
        <taxon>Pentapetalae</taxon>
        <taxon>rosids</taxon>
        <taxon>malvids</taxon>
        <taxon>Brassicales</taxon>
        <taxon>Brassicaceae</taxon>
        <taxon>Camelineae</taxon>
        <taxon>Arabidopsis</taxon>
    </lineage>
</organism>